<dbReference type="EMBL" id="CP001139">
    <property type="protein sequence ID" value="ACH65428.1"/>
    <property type="molecule type" value="Genomic_DNA"/>
</dbReference>
<dbReference type="RefSeq" id="WP_005417680.1">
    <property type="nucleotide sequence ID" value="NC_011184.1"/>
</dbReference>
<dbReference type="SMR" id="B5FA80"/>
<dbReference type="KEGG" id="vfm:VFMJ11_0488"/>
<dbReference type="HOGENOM" id="CLU_089475_5_0_6"/>
<dbReference type="Proteomes" id="UP000001857">
    <property type="component" value="Chromosome I"/>
</dbReference>
<dbReference type="GO" id="GO:0005829">
    <property type="term" value="C:cytosol"/>
    <property type="evidence" value="ECO:0007669"/>
    <property type="project" value="TreeGrafter"/>
</dbReference>
<dbReference type="GO" id="GO:0043024">
    <property type="term" value="F:ribosomal small subunit binding"/>
    <property type="evidence" value="ECO:0007669"/>
    <property type="project" value="TreeGrafter"/>
</dbReference>
<dbReference type="GO" id="GO:0030490">
    <property type="term" value="P:maturation of SSU-rRNA"/>
    <property type="evidence" value="ECO:0007669"/>
    <property type="project" value="UniProtKB-UniRule"/>
</dbReference>
<dbReference type="FunFam" id="3.30.300.20:FF:000007">
    <property type="entry name" value="Ribosome-binding factor A"/>
    <property type="match status" value="1"/>
</dbReference>
<dbReference type="Gene3D" id="3.30.300.20">
    <property type="match status" value="1"/>
</dbReference>
<dbReference type="HAMAP" id="MF_00003">
    <property type="entry name" value="RbfA"/>
    <property type="match status" value="1"/>
</dbReference>
<dbReference type="InterPro" id="IPR015946">
    <property type="entry name" value="KH_dom-like_a/b"/>
</dbReference>
<dbReference type="InterPro" id="IPR000238">
    <property type="entry name" value="RbfA"/>
</dbReference>
<dbReference type="InterPro" id="IPR023799">
    <property type="entry name" value="RbfA_dom_sf"/>
</dbReference>
<dbReference type="InterPro" id="IPR020053">
    <property type="entry name" value="Ribosome-bd_factorA_CS"/>
</dbReference>
<dbReference type="NCBIfam" id="TIGR00082">
    <property type="entry name" value="rbfA"/>
    <property type="match status" value="1"/>
</dbReference>
<dbReference type="PANTHER" id="PTHR33515">
    <property type="entry name" value="RIBOSOME-BINDING FACTOR A, CHLOROPLASTIC-RELATED"/>
    <property type="match status" value="1"/>
</dbReference>
<dbReference type="PANTHER" id="PTHR33515:SF1">
    <property type="entry name" value="RIBOSOME-BINDING FACTOR A, CHLOROPLASTIC-RELATED"/>
    <property type="match status" value="1"/>
</dbReference>
<dbReference type="Pfam" id="PF02033">
    <property type="entry name" value="RBFA"/>
    <property type="match status" value="1"/>
</dbReference>
<dbReference type="SUPFAM" id="SSF89919">
    <property type="entry name" value="Ribosome-binding factor A, RbfA"/>
    <property type="match status" value="1"/>
</dbReference>
<dbReference type="PROSITE" id="PS01319">
    <property type="entry name" value="RBFA"/>
    <property type="match status" value="1"/>
</dbReference>
<name>RBFA_ALIFM</name>
<evidence type="ECO:0000255" key="1">
    <source>
        <dbReference type="HAMAP-Rule" id="MF_00003"/>
    </source>
</evidence>
<accession>B5FA80</accession>
<proteinExistence type="inferred from homology"/>
<organism>
    <name type="scientific">Aliivibrio fischeri (strain MJ11)</name>
    <name type="common">Vibrio fischeri</name>
    <dbReference type="NCBI Taxonomy" id="388396"/>
    <lineage>
        <taxon>Bacteria</taxon>
        <taxon>Pseudomonadati</taxon>
        <taxon>Pseudomonadota</taxon>
        <taxon>Gammaproteobacteria</taxon>
        <taxon>Vibrionales</taxon>
        <taxon>Vibrionaceae</taxon>
        <taxon>Aliivibrio</taxon>
    </lineage>
</organism>
<gene>
    <name evidence="1" type="primary">rbfA</name>
    <name type="ordered locus">VFMJ11_0488</name>
</gene>
<comment type="function">
    <text evidence="1">One of several proteins that assist in the late maturation steps of the functional core of the 30S ribosomal subunit. Associates with free 30S ribosomal subunits (but not with 30S subunits that are part of 70S ribosomes or polysomes). Required for efficient processing of 16S rRNA. May interact with the 5'-terminal helix region of 16S rRNA.</text>
</comment>
<comment type="subunit">
    <text evidence="1">Monomer. Binds 30S ribosomal subunits, but not 50S ribosomal subunits or 70S ribosomes.</text>
</comment>
<comment type="subcellular location">
    <subcellularLocation>
        <location evidence="1">Cytoplasm</location>
    </subcellularLocation>
</comment>
<comment type="similarity">
    <text evidence="1">Belongs to the RbfA family.</text>
</comment>
<feature type="chain" id="PRO_1000088943" description="Ribosome-binding factor A">
    <location>
        <begin position="1"/>
        <end position="135"/>
    </location>
</feature>
<reference key="1">
    <citation type="submission" date="2008-08" db="EMBL/GenBank/DDBJ databases">
        <title>Complete sequence of Vibrio fischeri strain MJ11.</title>
        <authorList>
            <person name="Mandel M.J."/>
            <person name="Stabb E.V."/>
            <person name="Ruby E.G."/>
            <person name="Ferriera S."/>
            <person name="Johnson J."/>
            <person name="Kravitz S."/>
            <person name="Beeson K."/>
            <person name="Sutton G."/>
            <person name="Rogers Y.-H."/>
            <person name="Friedman R."/>
            <person name="Frazier M."/>
            <person name="Venter J.C."/>
        </authorList>
    </citation>
    <scope>NUCLEOTIDE SEQUENCE [LARGE SCALE GENOMIC DNA]</scope>
    <source>
        <strain>MJ11</strain>
    </source>
</reference>
<protein>
    <recommendedName>
        <fullName evidence="1">Ribosome-binding factor A</fullName>
    </recommendedName>
</protein>
<keyword id="KW-0963">Cytoplasm</keyword>
<keyword id="KW-0690">Ribosome biogenesis</keyword>
<sequence>MSKEFSRTQRVSQQLQKELAVMLQREVRDSRIGMVTISDVEVSRDLAYAKVFVTFFCVGDQTPESSLAALKEHEPSLRMMLGKRIRLRLTPEIRFTYDNTLVEGMRMSNLVTDVVNTDKRKMAESGRTESDEGEE</sequence>